<name>PAX_I96A3</name>
<keyword id="KW-1132">Decay of host mRNAs by virus</keyword>
<keyword id="KW-1262">Eukaryotic host gene expression shutoff by virus</keyword>
<keyword id="KW-1035">Host cytoplasm</keyword>
<keyword id="KW-1190">Host gene expression shutoff by virus</keyword>
<keyword id="KW-1192">Host mRNA suppression by virus</keyword>
<keyword id="KW-1048">Host nucleus</keyword>
<keyword id="KW-0945">Host-virus interaction</keyword>
<keyword id="KW-0688">Ribosomal frameshifting</keyword>
<proteinExistence type="inferred from homology"/>
<evidence type="ECO:0000250" key="1">
    <source>
        <dbReference type="UniProtKB" id="P0CK64"/>
    </source>
</evidence>
<evidence type="ECO:0000250" key="2">
    <source>
        <dbReference type="UniProtKB" id="P0CK68"/>
    </source>
</evidence>
<evidence type="ECO:0000250" key="3">
    <source>
        <dbReference type="UniProtKB" id="P0DJW8"/>
    </source>
</evidence>
<evidence type="ECO:0000250" key="4">
    <source>
        <dbReference type="UniProtKB" id="P0DXO5"/>
    </source>
</evidence>
<evidence type="ECO:0000305" key="5"/>
<gene>
    <name type="primary">PA</name>
</gene>
<feature type="chain" id="PRO_0000419362" description="Protein PA-X">
    <location>
        <begin position="1"/>
        <end position="252"/>
    </location>
</feature>
<feature type="active site" evidence="2">
    <location>
        <position position="80"/>
    </location>
</feature>
<feature type="active site" evidence="2">
    <location>
        <position position="108"/>
    </location>
</feature>
<feature type="site" description="Important for efficient shutoff activity and nuclear localization" evidence="4">
    <location>
        <position position="195"/>
    </location>
</feature>
<feature type="site" description="Important for efficient shutoff activity and nuclear localization" evidence="4">
    <location>
        <position position="198"/>
    </location>
</feature>
<feature type="site" description="Important for efficient shutoff activity and nuclear localization" evidence="4">
    <location>
        <position position="199"/>
    </location>
</feature>
<feature type="site" description="Important for efficient shutoff activity" evidence="3">
    <location>
        <position position="202"/>
    </location>
</feature>
<feature type="site" description="Important for efficient shutoff activity" evidence="3">
    <location>
        <position position="203"/>
    </location>
</feature>
<feature type="site" description="Important for efficient shutoff activity" evidence="3">
    <location>
        <position position="206"/>
    </location>
</feature>
<protein>
    <recommendedName>
        <fullName>Protein PA-X</fullName>
    </recommendedName>
</protein>
<accession>P0CK79</accession>
<sequence length="252" mass="29483">MEDFVRQCFNPMIVELAEKAMKEYGEDLKIETNKFAAICTHLEVCFMYSDFHFINEQGESIIVEPEDPNALLKHRFEIIEGRDRTMAWTVVNSICNTTGAEKPKFLPDLYDYKENRFIEIGVTRREVHIYYLEKANKIKSEKTHIHIFSFTGEEMATKADYTLDEESRARIKTRLFTIRQEMASRGLWDSFVSPKEAKKQLKKDLKSQEQCAGSLTKAFRRTSPALRILEPMWMDLNRTATLRASFLKCPKK</sequence>
<organism>
    <name type="scientific">Influenza A virus (strain A/China:Nanchang/11/1996 H1N1)</name>
    <dbReference type="NCBI Taxonomy" id="394786"/>
    <lineage>
        <taxon>Viruses</taxon>
        <taxon>Riboviria</taxon>
        <taxon>Orthornavirae</taxon>
        <taxon>Negarnaviricota</taxon>
        <taxon>Polyploviricotina</taxon>
        <taxon>Insthoviricetes</taxon>
        <taxon>Articulavirales</taxon>
        <taxon>Orthomyxoviridae</taxon>
        <taxon>Alphainfluenzavirus</taxon>
        <taxon>Alphainfluenzavirus influenzae</taxon>
        <taxon>Influenza A virus</taxon>
    </lineage>
</organism>
<dbReference type="EMBL" id="CY016241">
    <property type="status" value="NOT_ANNOTATED_CDS"/>
    <property type="molecule type" value="Other_RNA"/>
</dbReference>
<dbReference type="SMR" id="P0CK79"/>
<dbReference type="Proteomes" id="UP000008586">
    <property type="component" value="Genome"/>
</dbReference>
<dbReference type="GO" id="GO:0003723">
    <property type="term" value="F:RNA binding"/>
    <property type="evidence" value="ECO:0007669"/>
    <property type="project" value="InterPro"/>
</dbReference>
<dbReference type="GO" id="GO:0039694">
    <property type="term" value="P:viral RNA genome replication"/>
    <property type="evidence" value="ECO:0007669"/>
    <property type="project" value="InterPro"/>
</dbReference>
<dbReference type="GO" id="GO:0075523">
    <property type="term" value="P:viral translational frameshifting"/>
    <property type="evidence" value="ECO:0007669"/>
    <property type="project" value="UniProtKB-KW"/>
</dbReference>
<dbReference type="FunFam" id="3.40.91.90:FF:000001">
    <property type="entry name" value="Polymerase acidic protein"/>
    <property type="match status" value="1"/>
</dbReference>
<dbReference type="Gene3D" id="3.40.91.90">
    <property type="entry name" value="Influenza RNA-dependent RNA polymerase subunit PA, endonuclease domain"/>
    <property type="match status" value="1"/>
</dbReference>
<dbReference type="InterPro" id="IPR001009">
    <property type="entry name" value="PA/PA-X"/>
</dbReference>
<dbReference type="InterPro" id="IPR038372">
    <property type="entry name" value="PA/PA-X_sf"/>
</dbReference>
<dbReference type="Pfam" id="PF00603">
    <property type="entry name" value="Flu_PA"/>
    <property type="match status" value="1"/>
</dbReference>
<reference key="1">
    <citation type="submission" date="2006-09" db="EMBL/GenBank/DDBJ databases">
        <title>The NIAID influenza genome sequencing project.</title>
        <authorList>
            <person name="Ghedin E."/>
            <person name="Spiro D."/>
            <person name="Miller N."/>
            <person name="Zaborsky J."/>
            <person name="Feldblyum T."/>
            <person name="Subbu V."/>
            <person name="Shumway M."/>
            <person name="Sparenborg J."/>
            <person name="Groveman L."/>
            <person name="Halpin R."/>
            <person name="Sitz J."/>
            <person name="Koo H."/>
            <person name="Salzberg S.L."/>
            <person name="Webster R.G."/>
            <person name="Hoffmann E."/>
            <person name="Krauss S."/>
            <person name="Naeve C."/>
            <person name="Bao Y."/>
            <person name="Bolotov P."/>
            <person name="Dernovoy D."/>
            <person name="Kiryutin B."/>
            <person name="Lipman D.J."/>
            <person name="Tatusova T."/>
        </authorList>
    </citation>
    <scope>NUCLEOTIDE SEQUENCE [GENOMIC RNA]</scope>
</reference>
<reference key="2">
    <citation type="submission" date="2006-09" db="EMBL/GenBank/DDBJ databases">
        <authorList>
            <consortium name="The NIAID Influenza Genome Sequencing Consortium"/>
        </authorList>
    </citation>
    <scope>NUCLEOTIDE SEQUENCE [GENOMIC RNA]</scope>
</reference>
<organismHost>
    <name type="scientific">Aves</name>
    <dbReference type="NCBI Taxonomy" id="8782"/>
</organismHost>
<organismHost>
    <name type="scientific">Homo sapiens</name>
    <name type="common">Human</name>
    <dbReference type="NCBI Taxonomy" id="9606"/>
</organismHost>
<organismHost>
    <name type="scientific">Sus scrofa</name>
    <name type="common">Pig</name>
    <dbReference type="NCBI Taxonomy" id="9823"/>
</organismHost>
<comment type="function">
    <text evidence="1 4">Plays a major role in the shutoff of the host protein expression by cleaving mRNAs probably via an endonuclease activity. This host shutoff allows the virus to escape from the host antiviral response (By similarity). Hijacks host RNA splicing machinery to selectively target host RNAs containing introns for destruction. This may explain the preferential degradation of RNAs that have undergone co- or post-transcriptional processing (By similarity).</text>
</comment>
<comment type="subcellular location">
    <subcellularLocation>
        <location evidence="4">Host cytoplasm</location>
    </subcellularLocation>
    <subcellularLocation>
        <location evidence="4">Host nucleus</location>
    </subcellularLocation>
</comment>
<comment type="alternative products">
    <event type="ribosomal frameshifting"/>
    <isoform>
        <id>P0CK79-1</id>
        <name>PA-X</name>
        <sequence type="displayed"/>
    </isoform>
    <isoform>
        <id>Q07FH8-1</id>
        <name>PA</name>
        <sequence type="external"/>
    </isoform>
</comment>
<comment type="domain">
    <text evidence="1 4">The probable endonuclease active site in the N-terminus and the basic amino acid cluster in the C-terminus are important for the shutoff activity. The C-terminus acts as a nuclear localization signal (By similarity). The C-terminus is recruited to host protein complexes involved in nuclear Pol II RNA processing (By similarity).</text>
</comment>
<comment type="similarity">
    <text evidence="5">Belongs to the influenza viruses PA-X family.</text>
</comment>